<sequence length="686" mass="74202">MFWRDITLSVWRKKTTGLKTKKRLLPLVLAAALCSSPVWAEEATFTANFKDTDLKSFIETVGANLNKTIIMGPGVQGKVSIRTMTPLNERQYYQLFLNLLEAQGYAVVPMENDVLKVVKSSAAKVEPLPLVGEGSDNYAGDEMVTKVVPVRNVSVRELAPILRQMIDSAGSGNVVNYDPSNVIMLTGRASVVERLTEVIQRVDHAGNRTEEVIPLDNASASEIARVLESLTKNSGENQPATLKSQIVADERTNSVIVSGDPATRDKMRRLIRRLDSEMERSGNSQVFYLKYSKAEDLVDVLKQVSGTLTAAKEEAEGTVGSGREIVSIAASKHSNALIVTAPQDIMQSLQSVIEQLDIRRAQVHVEALIVEVAEGSNINFGVQWASKDAGLMQFANGTQIPIGTLGAAISQAKPQKGSTVISENGATTINPDTNGDLSTLAQLLSGFSGTAVGVVKGDWMALVQAVKNDSSSNVLSTPSITTLDNQEAFFMVGQDVPVLTGSTVGSNNSNPFNTVERKKVGIMLKVTPQINEGNAVQMVIEQEVSKVEGQTSLDVVFGERKLKTTVLANDGELIVLGGLMDDQAGESVAKVPLLGDIPLIGNLFKSTADKKEKRNLMVFIRPTILRDGMAADGVSQRKYNYMRAEQIYRDEQGLSLMPHTAQPVLPAQNQALPPEVRAFLNAGRTR</sequence>
<gene>
    <name type="primary">gspD2</name>
    <name evidence="7" type="synonym">gspD-beta</name>
    <name type="ordered locus">ETEC_3237</name>
</gene>
<name>GSPD2_ECOH1</name>
<evidence type="ECO:0000250" key="1">
    <source>
        <dbReference type="UniProtKB" id="P45779"/>
    </source>
</evidence>
<evidence type="ECO:0000255" key="2"/>
<evidence type="ECO:0000269" key="3">
    <source>
    </source>
</evidence>
<evidence type="ECO:0000269" key="4">
    <source>
    </source>
</evidence>
<evidence type="ECO:0000269" key="5">
    <source>
    </source>
</evidence>
<evidence type="ECO:0000269" key="6">
    <source>
    </source>
</evidence>
<evidence type="ECO:0000303" key="7">
    <source>
    </source>
</evidence>
<evidence type="ECO:0000305" key="8"/>
<evidence type="ECO:0000305" key="9">
    <source>
    </source>
</evidence>
<evidence type="ECO:0000305" key="10">
    <source>
    </source>
</evidence>
<evidence type="ECO:0000305" key="11">
    <source>
    </source>
</evidence>
<evidence type="ECO:0000305" key="12">
    <source>
    </source>
</evidence>
<evidence type="ECO:0007744" key="13">
    <source>
        <dbReference type="PDB" id="3OSS"/>
    </source>
</evidence>
<evidence type="ECO:0007744" key="14">
    <source>
        <dbReference type="PDB" id="4JTM"/>
    </source>
</evidence>
<evidence type="ECO:0007744" key="15">
    <source>
        <dbReference type="PDB" id="5ZDH"/>
    </source>
</evidence>
<evidence type="ECO:0007829" key="16">
    <source>
        <dbReference type="PDB" id="3OSS"/>
    </source>
</evidence>
<evidence type="ECO:0007829" key="17">
    <source>
        <dbReference type="PDB" id="4JTM"/>
    </source>
</evidence>
<proteinExistence type="evidence at protein level"/>
<keyword id="KW-0002">3D-structure</keyword>
<keyword id="KW-0998">Cell outer membrane</keyword>
<keyword id="KW-0472">Membrane</keyword>
<keyword id="KW-0653">Protein transport</keyword>
<keyword id="KW-0732">Signal</keyword>
<keyword id="KW-0812">Transmembrane</keyword>
<keyword id="KW-1134">Transmembrane beta strand</keyword>
<keyword id="KW-0813">Transport</keyword>
<dbReference type="EMBL" id="FN649414">
    <property type="protein sequence ID" value="CBJ02737.1"/>
    <property type="molecule type" value="Genomic_DNA"/>
</dbReference>
<dbReference type="PDB" id="3OSS">
    <property type="method" value="X-ray"/>
    <property type="resolution" value="2.63 A"/>
    <property type="chains" value="D=40-110, D=114-205"/>
</dbReference>
<dbReference type="PDB" id="4JTM">
    <property type="method" value="X-ray"/>
    <property type="resolution" value="1.43 A"/>
    <property type="chains" value="A/B=43-120"/>
</dbReference>
<dbReference type="PDB" id="5ZDH">
    <property type="method" value="EM"/>
    <property type="resolution" value="3.20 A"/>
    <property type="chains" value="A/B/C/D/E/F/G/H/I/J/K/L/M/N/O=41-686"/>
</dbReference>
<dbReference type="PDBsum" id="3OSS"/>
<dbReference type="PDBsum" id="4JTM"/>
<dbReference type="PDBsum" id="5ZDH"/>
<dbReference type="EMDB" id="EMD-6916"/>
<dbReference type="EMDB" id="EMD-6917"/>
<dbReference type="SMR" id="E3PJ86"/>
<dbReference type="KEGG" id="elh:ETEC_3237"/>
<dbReference type="HOGENOM" id="CLU_006756_1_1_6"/>
<dbReference type="EvolutionaryTrace" id="E3PJ86"/>
<dbReference type="GO" id="GO:0009279">
    <property type="term" value="C:cell outer membrane"/>
    <property type="evidence" value="ECO:0007669"/>
    <property type="project" value="UniProtKB-SubCell"/>
</dbReference>
<dbReference type="GO" id="GO:0015627">
    <property type="term" value="C:type II protein secretion system complex"/>
    <property type="evidence" value="ECO:0007669"/>
    <property type="project" value="InterPro"/>
</dbReference>
<dbReference type="GO" id="GO:0015628">
    <property type="term" value="P:protein secretion by the type II secretion system"/>
    <property type="evidence" value="ECO:0007669"/>
    <property type="project" value="InterPro"/>
</dbReference>
<dbReference type="FunFam" id="3.30.1370.120:FF:000001">
    <property type="entry name" value="General secretion pathway protein D"/>
    <property type="match status" value="1"/>
</dbReference>
<dbReference type="FunFam" id="3.30.1370.120:FF:000002">
    <property type="entry name" value="General secretion pathway protein D"/>
    <property type="match status" value="1"/>
</dbReference>
<dbReference type="FunFam" id="3.30.1370.120:FF:000003">
    <property type="entry name" value="General secretion pathway protein D"/>
    <property type="match status" value="1"/>
</dbReference>
<dbReference type="Gene3D" id="3.30.1370.120">
    <property type="match status" value="3"/>
</dbReference>
<dbReference type="InterPro" id="IPR050810">
    <property type="entry name" value="Bact_Secretion_Sys_Channel"/>
</dbReference>
<dbReference type="InterPro" id="IPR049371">
    <property type="entry name" value="GspD-like_N0"/>
</dbReference>
<dbReference type="InterPro" id="IPR001775">
    <property type="entry name" value="GspD/PilQ"/>
</dbReference>
<dbReference type="InterPro" id="IPR005644">
    <property type="entry name" value="NolW-like"/>
</dbReference>
<dbReference type="InterPro" id="IPR038591">
    <property type="entry name" value="NolW-like_sf"/>
</dbReference>
<dbReference type="InterPro" id="IPR004846">
    <property type="entry name" value="T2SS/T3SS_dom"/>
</dbReference>
<dbReference type="InterPro" id="IPR013356">
    <property type="entry name" value="T2SS_GspD"/>
</dbReference>
<dbReference type="NCBIfam" id="TIGR02517">
    <property type="entry name" value="type_II_gspD"/>
    <property type="match status" value="1"/>
</dbReference>
<dbReference type="PANTHER" id="PTHR30332">
    <property type="entry name" value="PROBABLE GENERAL SECRETION PATHWAY PROTEIN D"/>
    <property type="match status" value="1"/>
</dbReference>
<dbReference type="PANTHER" id="PTHR30332:SF24">
    <property type="entry name" value="SECRETIN GSPD-RELATED"/>
    <property type="match status" value="1"/>
</dbReference>
<dbReference type="Pfam" id="PF00263">
    <property type="entry name" value="Secretin"/>
    <property type="match status" value="1"/>
</dbReference>
<dbReference type="Pfam" id="PF03958">
    <property type="entry name" value="Secretin_N"/>
    <property type="match status" value="3"/>
</dbReference>
<dbReference type="Pfam" id="PF21305">
    <property type="entry name" value="type_II_gspD_N0"/>
    <property type="match status" value="1"/>
</dbReference>
<dbReference type="PRINTS" id="PR00811">
    <property type="entry name" value="BCTERIALGSPD"/>
</dbReference>
<dbReference type="PRINTS" id="PR01032">
    <property type="entry name" value="PHAGEIV"/>
</dbReference>
<comment type="function">
    <text evidence="9 10 12">Part of a type II secretion system (T2SS, formerly general secretion pathway, GSP) for the export of folded proteins across the outer membrane (Probable). This subunit forms the outer membrane channel (Probable).</text>
</comment>
<comment type="subunit">
    <text evidence="3 4 5 6">Forms a cylindrical channel with 15 subunits, each of which interacts with the surrounding pilotin AspS2 proteins (also called GspS-beta) (PubMed:29632366). Interacts with inner cell membrane protein GspC2 in the periplasm (PubMed:21931548). Forms multimers in the outer membrane (PubMed:22585966). The isolated N0 domain forms dimers that self-assemble into rings (PubMed:23820381).</text>
</comment>
<comment type="subcellular location">
    <subcellularLocation>
        <location evidence="4 12">Cell outer membrane</location>
    </subcellularLocation>
    <text evidence="4 12">Some protein is also found in the cell inner membrane, the inner membrane protein does not form multimers and is unstable (PubMed:22585966). Most of the protein is in the periplasm which it traverses to contact proteins of the cell inner membrane (Probable).</text>
</comment>
<comment type="domain">
    <text evidence="1 3 6">The N0 region interacts in the periplasm with GspC (PubMed:21931548). The S domain interacts with pilotin AspS2 (PubMed:29632366). The N0, N1, N2 and N3 domains are periplasmic, while the secretin and S domains form a channel that is partially inserted in the outer membrane. The cap gate extends out on the extracellular side of the channel partially closing the channel. The secretin domain forms a double beta-barrel structure; the outer barrel has an outer diameter of about 110 Angstroms while the inner barrel forms the central gate with a small pore in the closed state (By similarity).</text>
</comment>
<comment type="disruption phenotype">
    <text evidence="4">Severely disrupts assembly and function of T2SS-beta.</text>
</comment>
<comment type="miscellaneous">
    <text evidence="9 12">Encoded in a type II secretion system (T2SS-beta); this strain encodes 2 T2SS but only this one (beta) is expressed under standard laboratory conditions.</text>
</comment>
<comment type="similarity">
    <text evidence="8">Belongs to the bacterial secretin family. GSP D subfamily.</text>
</comment>
<feature type="signal peptide" evidence="2">
    <location>
        <begin position="1"/>
        <end position="40"/>
    </location>
</feature>
<feature type="chain" id="PRO_5003179632" description="Secretin GspD 2" evidence="2">
    <location>
        <begin position="41"/>
        <end position="686"/>
    </location>
</feature>
<feature type="region of interest" description="N0, contacts GspC2" evidence="3 11">
    <location>
        <begin position="41"/>
        <end position="140"/>
    </location>
</feature>
<feature type="region of interest" description="N1" evidence="11">
    <location>
        <begin position="142"/>
        <end position="206"/>
    </location>
</feature>
<feature type="region of interest" description="N2" evidence="11">
    <location>
        <begin position="207"/>
        <end position="279"/>
    </location>
</feature>
<feature type="region of interest" description="N3" evidence="11">
    <location>
        <begin position="282"/>
        <end position="357"/>
    </location>
</feature>
<feature type="region of interest" description="Secretin" evidence="11">
    <location>
        <begin position="360"/>
        <end position="627"/>
    </location>
</feature>
<feature type="region of interest" description="Cap gate" evidence="11">
    <location>
        <begin position="414"/>
        <end position="433"/>
    </location>
</feature>
<feature type="region of interest" description="S domain, contacts AspS2" evidence="6 11">
    <location>
        <begin position="629"/>
        <end position="686"/>
    </location>
</feature>
<feature type="site" description="May serve as a pivot that allows opening of the central gate for substrate egress" evidence="1">
    <location>
        <position position="493"/>
    </location>
</feature>
<feature type="mutagenesis site" description="Binds AspS2 normally." evidence="6">
    <original>EVRAFLN</original>
    <variation>AVRAAFLA</variation>
    <location>
        <begin position="675"/>
        <end position="681"/>
    </location>
</feature>
<feature type="mutagenesis site" description="No longer binds AspS2." evidence="6">
    <original>VRAFL</original>
    <variation>ARAAA</variation>
    <location>
        <begin position="676"/>
        <end position="680"/>
    </location>
</feature>
<feature type="mutagenesis site" description="Binds AspS2 normally." evidence="6">
    <original>V</original>
    <variation>A</variation>
    <location>
        <position position="676"/>
    </location>
</feature>
<feature type="mutagenesis site" description="No longer binds AspS2, the AspS2-GspD2 complex no longer forms in vivo." evidence="6">
    <original>F</original>
    <variation>A</variation>
    <location>
        <position position="679"/>
    </location>
</feature>
<feature type="mutagenesis site" description="Binds AspS2 normally." evidence="6">
    <original>L</original>
    <variation>A</variation>
    <location>
        <position position="680"/>
    </location>
</feature>
<feature type="mutagenesis site" description="Binds AspS2 normally." evidence="6">
    <original>RTR</original>
    <variation>AAA</variation>
    <location>
        <begin position="684"/>
        <end position="686"/>
    </location>
</feature>
<feature type="strand" evidence="17">
    <location>
        <begin position="48"/>
        <end position="53"/>
    </location>
</feature>
<feature type="helix" evidence="17">
    <location>
        <begin position="54"/>
        <end position="65"/>
    </location>
</feature>
<feature type="strand" evidence="17">
    <location>
        <begin position="68"/>
        <end position="71"/>
    </location>
</feature>
<feature type="strand" evidence="17">
    <location>
        <begin position="78"/>
        <end position="82"/>
    </location>
</feature>
<feature type="helix" evidence="17">
    <location>
        <begin position="89"/>
        <end position="103"/>
    </location>
</feature>
<feature type="strand" evidence="17">
    <location>
        <begin position="105"/>
        <end position="110"/>
    </location>
</feature>
<feature type="turn" evidence="17">
    <location>
        <begin position="111"/>
        <end position="113"/>
    </location>
</feature>
<feature type="strand" evidence="17">
    <location>
        <begin position="114"/>
        <end position="119"/>
    </location>
</feature>
<feature type="strand" evidence="16">
    <location>
        <begin position="143"/>
        <end position="149"/>
    </location>
</feature>
<feature type="strand" evidence="16">
    <location>
        <begin position="151"/>
        <end position="153"/>
    </location>
</feature>
<feature type="helix" evidence="16">
    <location>
        <begin position="155"/>
        <end position="158"/>
    </location>
</feature>
<feature type="helix" evidence="16">
    <location>
        <begin position="159"/>
        <end position="169"/>
    </location>
</feature>
<feature type="strand" evidence="16">
    <location>
        <begin position="174"/>
        <end position="178"/>
    </location>
</feature>
<feature type="turn" evidence="16">
    <location>
        <begin position="179"/>
        <end position="181"/>
    </location>
</feature>
<feature type="strand" evidence="16">
    <location>
        <begin position="182"/>
        <end position="188"/>
    </location>
</feature>
<feature type="helix" evidence="16">
    <location>
        <begin position="189"/>
        <end position="204"/>
    </location>
</feature>
<reference key="1">
    <citation type="journal article" date="2010" name="J. Bacteriol.">
        <title>A commensal gone bad: complete genome sequence of the prototypical enterotoxigenic Escherichia coli strain H10407.</title>
        <authorList>
            <person name="Crossman L.C."/>
            <person name="Chaudhuri R.R."/>
            <person name="Beatson S.A."/>
            <person name="Wells T.J."/>
            <person name="Desvaux M."/>
            <person name="Cunningham A.F."/>
            <person name="Petty N.K."/>
            <person name="Mahon V."/>
            <person name="Brinkley C."/>
            <person name="Hobman J.L."/>
            <person name="Savarino S.J."/>
            <person name="Turner S.M."/>
            <person name="Pallen M.J."/>
            <person name="Penn C.W."/>
            <person name="Parkhill J."/>
            <person name="Turner A.K."/>
            <person name="Johnson T.J."/>
            <person name="Thomson N.R."/>
            <person name="Smith S.G."/>
            <person name="Henderson I.R."/>
        </authorList>
    </citation>
    <scope>NUCLEOTIDE SEQUENCE [LARGE SCALE GENOMIC DNA]</scope>
    <source>
        <strain>H10407 / ETEC</strain>
    </source>
</reference>
<reference key="2">
    <citation type="journal article" date="2012" name="Infect. Immun.">
        <title>YghG (GspSbeta) is a novel pilot protein required for localization of the GspSbeta type II secretion system secretin of enterotoxigenic Escherichia coli.</title>
        <authorList>
            <person name="Strozen T.G."/>
            <person name="Li G."/>
            <person name="Howard S.P."/>
        </authorList>
    </citation>
    <scope>SUBUNIT</scope>
    <scope>SUBCELLULAR LOCATION</scope>
    <scope>DISRUPTION PHENOTYPE</scope>
    <source>
        <strain>H10407 / ETEC</strain>
    </source>
</reference>
<reference key="3">
    <citation type="journal article" date="2017" name="Nat. Struct. Mol. Biol.">
        <title>Structural insights into the secretin translocation channel in the type II secretion system.</title>
        <authorList>
            <person name="Yan Z."/>
            <person name="Yin M."/>
            <person name="Xu D."/>
            <person name="Zhu Y."/>
            <person name="Li X."/>
        </authorList>
    </citation>
    <scope>DISCUSSION OF SEQUENCE</scope>
    <scope>DOMAIN</scope>
    <source>
        <strain>H10407 / ETEC</strain>
    </source>
</reference>
<reference evidence="13" key="4">
    <citation type="journal article" date="2011" name="PLoS Pathog.">
        <title>Structural and functional studies on the interaction of GspC and GspD in the type II secretion system.</title>
        <authorList>
            <person name="Korotkov K.V."/>
            <person name="Johnson T.L."/>
            <person name="Jobling M.G."/>
            <person name="Pruneda J."/>
            <person name="Pardon E."/>
            <person name="Heroux A."/>
            <person name="Turley S."/>
            <person name="Steyaert J."/>
            <person name="Holmes R.K."/>
            <person name="Sandkvist M."/>
            <person name="Hol W.G."/>
        </authorList>
    </citation>
    <scope>X-RAY CRYSTALLOGRAPHY (2.63 ANGSTROMS) OF 40-110 AND 114-205 IN COMPLEX WITH GSPC2</scope>
    <scope>INTERACTION WITH GSPC2</scope>
    <scope>DOMAIN</scope>
    <source>
        <strain>H10407 / ETEC</strain>
    </source>
</reference>
<reference evidence="14" key="5">
    <citation type="journal article" date="2013" name="J. Struct. Biol.">
        <title>A dodecameric ring-like structure of the N0 domain of the type II secretin from enterotoxigenic Escherichia coli.</title>
        <authorList>
            <person name="Korotkov K.V."/>
            <person name="Delarosa J.R."/>
            <person name="Hol W.G."/>
        </authorList>
    </citation>
    <scope>X-RAY CRYSTALLOGRAPHY (1.43 ANGSTROMS) OF 43-120</scope>
    <scope>SUBUNIT</scope>
    <source>
        <strain>H10407 / ETEC</strain>
    </source>
</reference>
<reference evidence="15" key="6">
    <citation type="journal article" date="2018" name="Nat. Microbiol.">
        <title>Structural insight into the assembly of the type II secretion system pilotin-secretin complex from enterotoxigenic Escherichia coli.</title>
        <authorList>
            <person name="Yin M."/>
            <person name="Yan Z."/>
            <person name="Li X."/>
        </authorList>
    </citation>
    <scope>STRUCTURE BY ELECTRON MICROSCOPY (3.20 ANGSTROMS) OF 41-686 IN COMPLEX WITH ASPS2</scope>
    <scope>SUBCELLULAR LOCATION</scope>
    <scope>MUTAGENESIS OF 675-GLU--ASN-681; 676-VAL--LEU-680; VAL-676; PHE-679; LEU-680 AND 684-ARG--ARG-686</scope>
    <source>
        <strain>H10407 / ETEC</strain>
    </source>
</reference>
<protein>
    <recommendedName>
        <fullName evidence="8">Secretin GspD 2</fullName>
    </recommendedName>
    <alternativeName>
        <fullName>General secretion pathway protein D 2</fullName>
        <shortName>GspD</shortName>
    </alternativeName>
    <alternativeName>
        <fullName evidence="7">GspD-beta secretin</fullName>
    </alternativeName>
    <alternativeName>
        <fullName>Type II secretion system protein D 2</fullName>
        <shortName>T2SS protein D</shortName>
    </alternativeName>
</protein>
<accession>E3PJ86</accession>
<organism>
    <name type="scientific">Escherichia coli O78:H11 (strain H10407 / ETEC)</name>
    <dbReference type="NCBI Taxonomy" id="316401"/>
    <lineage>
        <taxon>Bacteria</taxon>
        <taxon>Pseudomonadati</taxon>
        <taxon>Pseudomonadota</taxon>
        <taxon>Gammaproteobacteria</taxon>
        <taxon>Enterobacterales</taxon>
        <taxon>Enterobacteriaceae</taxon>
        <taxon>Escherichia</taxon>
    </lineage>
</organism>